<sequence>MNPLVYFSSQSENTHRFICRVDLPALRIPIATEQPALKVDRPYILVVPSYGGGSTKGAVPRQVIIFLNDPHNRAYLRGVIAAGNTNFGAAYCIAGDIIAQKCQVPYLYRFELLGTAEDVANVRKGVTEFWQQQTT</sequence>
<feature type="chain" id="PRO_0000164317" description="Protein NrdI">
    <location>
        <begin position="1"/>
        <end position="135"/>
    </location>
</feature>
<accession>Q6D1W1</accession>
<keyword id="KW-1185">Reference proteome</keyword>
<proteinExistence type="inferred from homology"/>
<evidence type="ECO:0000255" key="1">
    <source>
        <dbReference type="HAMAP-Rule" id="MF_00128"/>
    </source>
</evidence>
<name>NRDI_PECAS</name>
<organism>
    <name type="scientific">Pectobacterium atrosepticum (strain SCRI 1043 / ATCC BAA-672)</name>
    <name type="common">Erwinia carotovora subsp. atroseptica</name>
    <dbReference type="NCBI Taxonomy" id="218491"/>
    <lineage>
        <taxon>Bacteria</taxon>
        <taxon>Pseudomonadati</taxon>
        <taxon>Pseudomonadota</taxon>
        <taxon>Gammaproteobacteria</taxon>
        <taxon>Enterobacterales</taxon>
        <taxon>Pectobacteriaceae</taxon>
        <taxon>Pectobacterium</taxon>
    </lineage>
</organism>
<reference key="1">
    <citation type="journal article" date="2004" name="Proc. Natl. Acad. Sci. U.S.A.">
        <title>Genome sequence of the enterobacterial phytopathogen Erwinia carotovora subsp. atroseptica and characterization of virulence factors.</title>
        <authorList>
            <person name="Bell K.S."/>
            <person name="Sebaihia M."/>
            <person name="Pritchard L."/>
            <person name="Holden M.T.G."/>
            <person name="Hyman L.J."/>
            <person name="Holeva M.C."/>
            <person name="Thomson N.R."/>
            <person name="Bentley S.D."/>
            <person name="Churcher L.J.C."/>
            <person name="Mungall K."/>
            <person name="Atkin R."/>
            <person name="Bason N."/>
            <person name="Brooks K."/>
            <person name="Chillingworth T."/>
            <person name="Clark K."/>
            <person name="Doggett J."/>
            <person name="Fraser A."/>
            <person name="Hance Z."/>
            <person name="Hauser H."/>
            <person name="Jagels K."/>
            <person name="Moule S."/>
            <person name="Norbertczak H."/>
            <person name="Ormond D."/>
            <person name="Price C."/>
            <person name="Quail M.A."/>
            <person name="Sanders M."/>
            <person name="Walker D."/>
            <person name="Whitehead S."/>
            <person name="Salmond G.P.C."/>
            <person name="Birch P.R.J."/>
            <person name="Parkhill J."/>
            <person name="Toth I.K."/>
        </authorList>
    </citation>
    <scope>NUCLEOTIDE SEQUENCE [LARGE SCALE GENOMIC DNA]</scope>
    <source>
        <strain>SCRI 1043 / ATCC BAA-672</strain>
    </source>
</reference>
<protein>
    <recommendedName>
        <fullName evidence="1">Protein NrdI</fullName>
    </recommendedName>
</protein>
<gene>
    <name evidence="1" type="primary">nrdI</name>
    <name type="ordered locus">ECA3336</name>
</gene>
<dbReference type="EMBL" id="BX950851">
    <property type="protein sequence ID" value="CAG76234.1"/>
    <property type="molecule type" value="Genomic_DNA"/>
</dbReference>
<dbReference type="RefSeq" id="WP_011094849.1">
    <property type="nucleotide sequence ID" value="NC_004547.2"/>
</dbReference>
<dbReference type="SMR" id="Q6D1W1"/>
<dbReference type="STRING" id="218491.ECA3336"/>
<dbReference type="GeneID" id="57210025"/>
<dbReference type="KEGG" id="eca:ECA3336"/>
<dbReference type="PATRIC" id="fig|218491.5.peg.3387"/>
<dbReference type="eggNOG" id="COG1780">
    <property type="taxonomic scope" value="Bacteria"/>
</dbReference>
<dbReference type="HOGENOM" id="CLU_114845_0_0_6"/>
<dbReference type="OrthoDB" id="350535at2"/>
<dbReference type="Proteomes" id="UP000007966">
    <property type="component" value="Chromosome"/>
</dbReference>
<dbReference type="GO" id="GO:0010181">
    <property type="term" value="F:FMN binding"/>
    <property type="evidence" value="ECO:0007669"/>
    <property type="project" value="InterPro"/>
</dbReference>
<dbReference type="GO" id="GO:0036211">
    <property type="term" value="P:protein modification process"/>
    <property type="evidence" value="ECO:0007669"/>
    <property type="project" value="InterPro"/>
</dbReference>
<dbReference type="FunFam" id="3.40.50.360:FF:000005">
    <property type="entry name" value="Protein NrdI"/>
    <property type="match status" value="1"/>
</dbReference>
<dbReference type="Gene3D" id="3.40.50.360">
    <property type="match status" value="1"/>
</dbReference>
<dbReference type="HAMAP" id="MF_00128">
    <property type="entry name" value="NrdI"/>
    <property type="match status" value="1"/>
</dbReference>
<dbReference type="InterPro" id="IPR029039">
    <property type="entry name" value="Flavoprotein-like_sf"/>
</dbReference>
<dbReference type="InterPro" id="IPR020852">
    <property type="entry name" value="RNR_Ib_NrdI_bac"/>
</dbReference>
<dbReference type="InterPro" id="IPR004465">
    <property type="entry name" value="RNR_NrdI"/>
</dbReference>
<dbReference type="NCBIfam" id="TIGR00333">
    <property type="entry name" value="nrdI"/>
    <property type="match status" value="1"/>
</dbReference>
<dbReference type="PANTHER" id="PTHR37297">
    <property type="entry name" value="PROTEIN NRDI"/>
    <property type="match status" value="1"/>
</dbReference>
<dbReference type="PANTHER" id="PTHR37297:SF1">
    <property type="entry name" value="PROTEIN NRDI"/>
    <property type="match status" value="1"/>
</dbReference>
<dbReference type="Pfam" id="PF07972">
    <property type="entry name" value="Flavodoxin_NdrI"/>
    <property type="match status" value="1"/>
</dbReference>
<dbReference type="PIRSF" id="PIRSF005087">
    <property type="entry name" value="NrdI"/>
    <property type="match status" value="1"/>
</dbReference>
<dbReference type="SUPFAM" id="SSF52218">
    <property type="entry name" value="Flavoproteins"/>
    <property type="match status" value="1"/>
</dbReference>
<comment type="function">
    <text evidence="1">Probably involved in ribonucleotide reductase function.</text>
</comment>
<comment type="similarity">
    <text evidence="1">Belongs to the NrdI family.</text>
</comment>